<accession>Q95730</accession>
<gene>
    <name type="primary">MT-CYB</name>
    <name type="synonym">COB</name>
    <name type="synonym">CYTB</name>
    <name type="synonym">MTCYB</name>
</gene>
<protein>
    <recommendedName>
        <fullName>Cytochrome b</fullName>
    </recommendedName>
    <alternativeName>
        <fullName>Complex III subunit 3</fullName>
    </alternativeName>
    <alternativeName>
        <fullName>Complex III subunit III</fullName>
    </alternativeName>
    <alternativeName>
        <fullName>Cytochrome b-c1 complex subunit 3</fullName>
    </alternativeName>
    <alternativeName>
        <fullName>Ubiquinol-cytochrome-c reductase complex cytochrome b subunit</fullName>
    </alternativeName>
</protein>
<comment type="function">
    <text evidence="2">Component of the ubiquinol-cytochrome c reductase complex (complex III or cytochrome b-c1 complex) that is part of the mitochondrial respiratory chain. The b-c1 complex mediates electron transfer from ubiquinol to cytochrome c. Contributes to the generation of a proton gradient across the mitochondrial membrane that is then used for ATP synthesis.</text>
</comment>
<comment type="cofactor">
    <cofactor evidence="2">
        <name>heme b</name>
        <dbReference type="ChEBI" id="CHEBI:60344"/>
    </cofactor>
    <text evidence="2">Binds 2 heme b groups non-covalently.</text>
</comment>
<comment type="subunit">
    <text evidence="2">The cytochrome bc1 complex contains 11 subunits: 3 respiratory subunits (MT-CYB, CYC1 and UQCRFS1), 2 core proteins (UQCRC1 and UQCRC2) and 6 low-molecular weight proteins (UQCRH/QCR6, UQCRB/QCR7, UQCRQ/QCR8, UQCR10/QCR9, UQCR11/QCR10 and a cleavage product of UQCRFS1). This cytochrome bc1 complex then forms a dimer.</text>
</comment>
<comment type="subcellular location">
    <subcellularLocation>
        <location evidence="2">Mitochondrion inner membrane</location>
        <topology evidence="2">Multi-pass membrane protein</topology>
    </subcellularLocation>
</comment>
<comment type="miscellaneous">
    <text evidence="1">Heme 1 (or BL or b562) is low-potential and absorbs at about 562 nm, and heme 2 (or BH or b566) is high-potential and absorbs at about 566 nm.</text>
</comment>
<comment type="similarity">
    <text evidence="3 4">Belongs to the cytochrome b family.</text>
</comment>
<comment type="caution">
    <text evidence="2">The full-length protein contains only eight transmembrane helices, not nine as predicted by bioinformatics tools.</text>
</comment>
<name>CYB_ARTGW</name>
<sequence length="379" mass="42704">MTNIRKTHPLLKIINSSFVDLPAPSSLSSWWNFGSLLGVCLGVQILTGLFLAMHYTSDTATAFNSVNHICRDVNYGWLLRYLHANGASMFFICLYLHVGRGLYYGSYTYSETWNIGILLLFAVMATAFMGYVLPWGQMSFWGATVITNLLSAIPYIGTDLVQWIWGGFSVDKATLTRFFAFHFLLPFIVTALVMVHLLFLHETGSNNPTGIPSDPDMIPFHPYYTIKDILGFLVMLTALATLVLFSPDLLGDPDNYIPANPLTTPPHIKPEWYFFFAYAILRSIPNKLGGVLALVVSILILAIVPILHMSKQRSMMFRPLSQCLFWLLVAVLFTLTWIGGQPVEHPYIIIGQTASALYFLIILFLMPMTSMVENYLLKW</sequence>
<proteinExistence type="inferred from homology"/>
<keyword id="KW-0249">Electron transport</keyword>
<keyword id="KW-0349">Heme</keyword>
<keyword id="KW-0408">Iron</keyword>
<keyword id="KW-0472">Membrane</keyword>
<keyword id="KW-0479">Metal-binding</keyword>
<keyword id="KW-0496">Mitochondrion</keyword>
<keyword id="KW-0999">Mitochondrion inner membrane</keyword>
<keyword id="KW-0679">Respiratory chain</keyword>
<keyword id="KW-0812">Transmembrane</keyword>
<keyword id="KW-1133">Transmembrane helix</keyword>
<keyword id="KW-0813">Transport</keyword>
<keyword id="KW-0830">Ubiquinone</keyword>
<geneLocation type="mitochondrion"/>
<reference key="1">
    <citation type="submission" date="1996-08" db="EMBL/GenBank/DDBJ databases">
        <title>Phylogenetic accuracy, stability, and congruence: relationships within and among the New World bat genera Artibeus, Dermanura, and Koopmania.</title>
        <authorList>
            <person name="den Bussche R.A."/>
            <person name="Hudgeons J.L."/>
            <person name="Baker R.J."/>
        </authorList>
    </citation>
    <scope>NUCLEOTIDE SEQUENCE [GENOMIC DNA]</scope>
    <source>
        <strain>Isolate TK 7877</strain>
    </source>
</reference>
<organism>
    <name type="scientific">Artibeus glaucus watsoni</name>
    <name type="common">Thomas's fruit-eating bat</name>
    <name type="synonym">Dermanura watsoni</name>
    <dbReference type="NCBI Taxonomy" id="51016"/>
    <lineage>
        <taxon>Eukaryota</taxon>
        <taxon>Metazoa</taxon>
        <taxon>Chordata</taxon>
        <taxon>Craniata</taxon>
        <taxon>Vertebrata</taxon>
        <taxon>Euteleostomi</taxon>
        <taxon>Mammalia</taxon>
        <taxon>Eutheria</taxon>
        <taxon>Laurasiatheria</taxon>
        <taxon>Chiroptera</taxon>
        <taxon>Yangochiroptera</taxon>
        <taxon>Phyllostomidae</taxon>
        <taxon>Stenodermatinae</taxon>
        <taxon>Artibeus</taxon>
    </lineage>
</organism>
<feature type="chain" id="PRO_0000060631" description="Cytochrome b">
    <location>
        <begin position="1"/>
        <end position="379"/>
    </location>
</feature>
<feature type="transmembrane region" description="Helical" evidence="2">
    <location>
        <begin position="33"/>
        <end position="53"/>
    </location>
</feature>
<feature type="transmembrane region" description="Helical" evidence="2">
    <location>
        <begin position="77"/>
        <end position="98"/>
    </location>
</feature>
<feature type="transmembrane region" description="Helical" evidence="2">
    <location>
        <begin position="113"/>
        <end position="133"/>
    </location>
</feature>
<feature type="transmembrane region" description="Helical" evidence="2">
    <location>
        <begin position="178"/>
        <end position="198"/>
    </location>
</feature>
<feature type="transmembrane region" description="Helical" evidence="2">
    <location>
        <begin position="226"/>
        <end position="246"/>
    </location>
</feature>
<feature type="transmembrane region" description="Helical" evidence="2">
    <location>
        <begin position="288"/>
        <end position="308"/>
    </location>
</feature>
<feature type="transmembrane region" description="Helical" evidence="2">
    <location>
        <begin position="320"/>
        <end position="340"/>
    </location>
</feature>
<feature type="transmembrane region" description="Helical" evidence="2">
    <location>
        <begin position="347"/>
        <end position="367"/>
    </location>
</feature>
<feature type="binding site" description="axial binding residue" evidence="2">
    <location>
        <position position="83"/>
    </location>
    <ligand>
        <name>heme b</name>
        <dbReference type="ChEBI" id="CHEBI:60344"/>
        <label>b562</label>
    </ligand>
    <ligandPart>
        <name>Fe</name>
        <dbReference type="ChEBI" id="CHEBI:18248"/>
    </ligandPart>
</feature>
<feature type="binding site" description="axial binding residue" evidence="2">
    <location>
        <position position="97"/>
    </location>
    <ligand>
        <name>heme b</name>
        <dbReference type="ChEBI" id="CHEBI:60344"/>
        <label>b566</label>
    </ligand>
    <ligandPart>
        <name>Fe</name>
        <dbReference type="ChEBI" id="CHEBI:18248"/>
    </ligandPart>
</feature>
<feature type="binding site" description="axial binding residue" evidence="2">
    <location>
        <position position="182"/>
    </location>
    <ligand>
        <name>heme b</name>
        <dbReference type="ChEBI" id="CHEBI:60344"/>
        <label>b562</label>
    </ligand>
    <ligandPart>
        <name>Fe</name>
        <dbReference type="ChEBI" id="CHEBI:18248"/>
    </ligandPart>
</feature>
<feature type="binding site" description="axial binding residue" evidence="2">
    <location>
        <position position="196"/>
    </location>
    <ligand>
        <name>heme b</name>
        <dbReference type="ChEBI" id="CHEBI:60344"/>
        <label>b566</label>
    </ligand>
    <ligandPart>
        <name>Fe</name>
        <dbReference type="ChEBI" id="CHEBI:18248"/>
    </ligandPart>
</feature>
<feature type="binding site" evidence="2">
    <location>
        <position position="201"/>
    </location>
    <ligand>
        <name>a ubiquinone</name>
        <dbReference type="ChEBI" id="CHEBI:16389"/>
    </ligand>
</feature>
<evidence type="ECO:0000250" key="1"/>
<evidence type="ECO:0000250" key="2">
    <source>
        <dbReference type="UniProtKB" id="P00157"/>
    </source>
</evidence>
<evidence type="ECO:0000255" key="3">
    <source>
        <dbReference type="PROSITE-ProRule" id="PRU00967"/>
    </source>
</evidence>
<evidence type="ECO:0000255" key="4">
    <source>
        <dbReference type="PROSITE-ProRule" id="PRU00968"/>
    </source>
</evidence>
<dbReference type="EMBL" id="U66516">
    <property type="protein sequence ID" value="AAB06773.1"/>
    <property type="molecule type" value="Genomic_DNA"/>
</dbReference>
<dbReference type="SMR" id="Q95730"/>
<dbReference type="GO" id="GO:0005743">
    <property type="term" value="C:mitochondrial inner membrane"/>
    <property type="evidence" value="ECO:0007669"/>
    <property type="project" value="UniProtKB-SubCell"/>
</dbReference>
<dbReference type="GO" id="GO:0045275">
    <property type="term" value="C:respiratory chain complex III"/>
    <property type="evidence" value="ECO:0007669"/>
    <property type="project" value="InterPro"/>
</dbReference>
<dbReference type="GO" id="GO:0046872">
    <property type="term" value="F:metal ion binding"/>
    <property type="evidence" value="ECO:0007669"/>
    <property type="project" value="UniProtKB-KW"/>
</dbReference>
<dbReference type="GO" id="GO:0008121">
    <property type="term" value="F:ubiquinol-cytochrome-c reductase activity"/>
    <property type="evidence" value="ECO:0007669"/>
    <property type="project" value="InterPro"/>
</dbReference>
<dbReference type="GO" id="GO:0006122">
    <property type="term" value="P:mitochondrial electron transport, ubiquinol to cytochrome c"/>
    <property type="evidence" value="ECO:0007669"/>
    <property type="project" value="TreeGrafter"/>
</dbReference>
<dbReference type="CDD" id="cd00290">
    <property type="entry name" value="cytochrome_b_C"/>
    <property type="match status" value="1"/>
</dbReference>
<dbReference type="CDD" id="cd00284">
    <property type="entry name" value="Cytochrome_b_N"/>
    <property type="match status" value="1"/>
</dbReference>
<dbReference type="FunFam" id="1.20.810.10:FF:000002">
    <property type="entry name" value="Cytochrome b"/>
    <property type="match status" value="1"/>
</dbReference>
<dbReference type="Gene3D" id="1.20.810.10">
    <property type="entry name" value="Cytochrome Bc1 Complex, Chain C"/>
    <property type="match status" value="1"/>
</dbReference>
<dbReference type="InterPro" id="IPR005798">
    <property type="entry name" value="Cyt_b/b6_C"/>
</dbReference>
<dbReference type="InterPro" id="IPR036150">
    <property type="entry name" value="Cyt_b/b6_C_sf"/>
</dbReference>
<dbReference type="InterPro" id="IPR005797">
    <property type="entry name" value="Cyt_b/b6_N"/>
</dbReference>
<dbReference type="InterPro" id="IPR027387">
    <property type="entry name" value="Cytb/b6-like_sf"/>
</dbReference>
<dbReference type="InterPro" id="IPR030689">
    <property type="entry name" value="Cytochrome_b"/>
</dbReference>
<dbReference type="InterPro" id="IPR048260">
    <property type="entry name" value="Cytochrome_b_C_euk/bac"/>
</dbReference>
<dbReference type="InterPro" id="IPR048259">
    <property type="entry name" value="Cytochrome_b_N_euk/bac"/>
</dbReference>
<dbReference type="InterPro" id="IPR016174">
    <property type="entry name" value="Di-haem_cyt_TM"/>
</dbReference>
<dbReference type="PANTHER" id="PTHR19271">
    <property type="entry name" value="CYTOCHROME B"/>
    <property type="match status" value="1"/>
</dbReference>
<dbReference type="PANTHER" id="PTHR19271:SF16">
    <property type="entry name" value="CYTOCHROME B"/>
    <property type="match status" value="1"/>
</dbReference>
<dbReference type="Pfam" id="PF00032">
    <property type="entry name" value="Cytochrom_B_C"/>
    <property type="match status" value="1"/>
</dbReference>
<dbReference type="Pfam" id="PF00033">
    <property type="entry name" value="Cytochrome_B"/>
    <property type="match status" value="1"/>
</dbReference>
<dbReference type="PIRSF" id="PIRSF038885">
    <property type="entry name" value="COB"/>
    <property type="match status" value="1"/>
</dbReference>
<dbReference type="SUPFAM" id="SSF81648">
    <property type="entry name" value="a domain/subunit of cytochrome bc1 complex (Ubiquinol-cytochrome c reductase)"/>
    <property type="match status" value="1"/>
</dbReference>
<dbReference type="SUPFAM" id="SSF81342">
    <property type="entry name" value="Transmembrane di-heme cytochromes"/>
    <property type="match status" value="1"/>
</dbReference>
<dbReference type="PROSITE" id="PS51003">
    <property type="entry name" value="CYTB_CTER"/>
    <property type="match status" value="1"/>
</dbReference>
<dbReference type="PROSITE" id="PS51002">
    <property type="entry name" value="CYTB_NTER"/>
    <property type="match status" value="1"/>
</dbReference>